<keyword id="KW-0158">Chromosome</keyword>
<keyword id="KW-0238">DNA-binding</keyword>
<keyword id="KW-0325">Glycoprotein</keyword>
<keyword id="KW-1017">Isopeptide bond</keyword>
<keyword id="KW-0544">Nucleosome core</keyword>
<keyword id="KW-0539">Nucleus</keyword>
<keyword id="KW-0597">Phosphoprotein</keyword>
<keyword id="KW-0832">Ubl conjugation</keyword>
<accession>P06146</accession>
<organism>
    <name type="scientific">Lytechinus pictus</name>
    <name type="common">Painted sea urchin</name>
    <dbReference type="NCBI Taxonomy" id="7653"/>
    <lineage>
        <taxon>Eukaryota</taxon>
        <taxon>Metazoa</taxon>
        <taxon>Echinodermata</taxon>
        <taxon>Eleutherozoa</taxon>
        <taxon>Echinozoa</taxon>
        <taxon>Echinoidea</taxon>
        <taxon>Euechinoidea</taxon>
        <taxon>Echinacea</taxon>
        <taxon>Temnopleuroida</taxon>
        <taxon>Toxopneustidae</taxon>
        <taxon>Lytechinus</taxon>
    </lineage>
</organism>
<sequence>MPRSPSKSSPRKGSPRKGSPRKGSPKRGGKGAKRAGKGGRRRNVVKRRRRRRESYGSYIYRVLKQVHPDTGISSRGMSVMNSFVNDVFERIAGEASRLCQANRRRTISSREIQTAVRLLLPGELAKHAVSEGTKAVTKYTTSR</sequence>
<protein>
    <recommendedName>
        <fullName>Histone H2B.2, sperm</fullName>
    </recommendedName>
</protein>
<feature type="initiator methionine" description="Removed" evidence="1">
    <location>
        <position position="1"/>
    </location>
</feature>
<feature type="chain" id="PRO_0000071886" description="Histone H2B.2, sperm">
    <location>
        <begin position="2"/>
        <end position="143"/>
    </location>
</feature>
<feature type="region of interest" description="Disordered" evidence="2">
    <location>
        <begin position="1"/>
        <end position="52"/>
    </location>
</feature>
<feature type="short sequence motif" description="SPKK motif 1">
    <location>
        <begin position="4"/>
        <end position="7"/>
    </location>
</feature>
<feature type="short sequence motif" description="SPKK motif 2">
    <location>
        <begin position="9"/>
        <end position="12"/>
    </location>
</feature>
<feature type="short sequence motif" description="SPKK motif 3">
    <location>
        <begin position="14"/>
        <end position="17"/>
    </location>
</feature>
<feature type="short sequence motif" description="SPKK motif 4">
    <location>
        <begin position="19"/>
        <end position="22"/>
    </location>
</feature>
<feature type="short sequence motif" description="SPKK motif 5">
    <location>
        <begin position="24"/>
        <end position="27"/>
    </location>
</feature>
<feature type="compositionally biased region" description="Basic residues" evidence="2">
    <location>
        <begin position="9"/>
        <end position="52"/>
    </location>
</feature>
<feature type="modified residue" description="Phosphoserine" evidence="1">
    <location>
        <position position="14"/>
    </location>
</feature>
<feature type="modified residue" description="Phosphoserine" evidence="1">
    <location>
        <position position="19"/>
    </location>
</feature>
<feature type="modified residue" description="Phosphoserine" evidence="1">
    <location>
        <position position="24"/>
    </location>
</feature>
<feature type="glycosylation site" description="O-linked (GlcNAc) serine" evidence="1">
    <location>
        <position position="130"/>
    </location>
</feature>
<feature type="cross-link" description="Glycyl lysine isopeptide (Lys-Gly) (interchain with G-Cter in ubiquitin)" evidence="1">
    <location>
        <position position="138"/>
    </location>
</feature>
<feature type="sequence variant">
    <original>G</original>
    <variation>A</variation>
    <location>
        <position position="76"/>
    </location>
</feature>
<feature type="sequence variant">
    <original>K</original>
    <variation>N</variation>
    <location>
        <position position="138"/>
    </location>
</feature>
<proteinExistence type="evidence at transcript level"/>
<comment type="function">
    <text>Core component of nucleosome. Nucleosomes wrap and compact DNA into chromatin, limiting DNA accessibility to the cellular machineries which require DNA as a template. Histones thereby play a central role in transcription regulation, DNA repair, DNA replication and chromosomal stability. DNA accessibility is regulated via a complex set of post-translational modifications of histones, also called histone code, and nucleosome remodeling.</text>
</comment>
<comment type="subunit">
    <text>The nucleosome is a histone octamer containing two molecules each of H2A, H2B, H3 and H4 assembled in one H3-H4 heterotetramer and two H2A-H2B heterodimers. The octamer wraps approximately 147 bp of DNA.</text>
</comment>
<comment type="subcellular location">
    <subcellularLocation>
        <location>Nucleus</location>
    </subcellularLocation>
    <subcellularLocation>
        <location>Chromosome</location>
    </subcellularLocation>
</comment>
<comment type="tissue specificity">
    <text evidence="3">Testis-specific.</text>
</comment>
<comment type="domain">
    <text>Contains 5 SPKK motifs which may interact with the minor groove of A/T-rich DNA sites. Phosphorylation of this motif may regulate DNA binding. This motif is reiterated in both termini of histone H1 and in the C-terminus of plant H2A, but its presence in the N-terminus seems to be unique to sea urchin histones H2B.</text>
</comment>
<comment type="PTM">
    <text evidence="1">Monoubiquitination of Lys-138 gives a specific tag for epigenetic transcriptional activation and is also prerequisite for histone H3 'Lys-4' and 'Lys-79' methylation.</text>
</comment>
<comment type="PTM">
    <text evidence="1">Phosphorylated on SPKK motifs 3, 4 and 5; which may regulate DNA binding. Dephosphorylated during maturation of spermatids to mature sperm and rephosphorylated at fertilization (By similarity).</text>
</comment>
<comment type="PTM">
    <text evidence="1">GlcNAcylation at Ser-130 promotes monoubiquitination of Lys-138. It fluctuates in response to extracellular glucose, and associates with transcribed genes (By similarity).</text>
</comment>
<comment type="similarity">
    <text evidence="4">Belongs to the histone H2B family.</text>
</comment>
<evidence type="ECO:0000250" key="1"/>
<evidence type="ECO:0000256" key="2">
    <source>
        <dbReference type="SAM" id="MobiDB-lite"/>
    </source>
</evidence>
<evidence type="ECO:0000269" key="3">
    <source>
    </source>
</evidence>
<evidence type="ECO:0000305" key="4"/>
<dbReference type="EMBL" id="X04384">
    <property type="protein sequence ID" value="CAA27971.1"/>
    <property type="molecule type" value="Genomic_DNA"/>
</dbReference>
<dbReference type="EMBL" id="M13635">
    <property type="protein sequence ID" value="AAA30001.1"/>
    <property type="molecule type" value="mRNA"/>
</dbReference>
<dbReference type="PIR" id="A24329">
    <property type="entry name" value="HSURB2"/>
</dbReference>
<dbReference type="RefSeq" id="XP_063967980.1">
    <property type="nucleotide sequence ID" value="XM_064111910.1"/>
</dbReference>
<dbReference type="SMR" id="P06146"/>
<dbReference type="iPTMnet" id="P06146"/>
<dbReference type="EnsemblMetazoa" id="XM_054916690.1">
    <property type="protein sequence ID" value="XP_054772665.1"/>
    <property type="gene ID" value="LOC129280669"/>
</dbReference>
<dbReference type="GeneID" id="129280669"/>
<dbReference type="OrthoDB" id="10036053at2759"/>
<dbReference type="GO" id="GO:0000786">
    <property type="term" value="C:nucleosome"/>
    <property type="evidence" value="ECO:0007669"/>
    <property type="project" value="UniProtKB-KW"/>
</dbReference>
<dbReference type="GO" id="GO:0005634">
    <property type="term" value="C:nucleus"/>
    <property type="evidence" value="ECO:0007669"/>
    <property type="project" value="UniProtKB-SubCell"/>
</dbReference>
<dbReference type="GO" id="GO:0003677">
    <property type="term" value="F:DNA binding"/>
    <property type="evidence" value="ECO:0007669"/>
    <property type="project" value="UniProtKB-KW"/>
</dbReference>
<dbReference type="GO" id="GO:0046982">
    <property type="term" value="F:protein heterodimerization activity"/>
    <property type="evidence" value="ECO:0007669"/>
    <property type="project" value="InterPro"/>
</dbReference>
<dbReference type="GO" id="GO:0030527">
    <property type="term" value="F:structural constituent of chromatin"/>
    <property type="evidence" value="ECO:0007669"/>
    <property type="project" value="InterPro"/>
</dbReference>
<dbReference type="CDD" id="cd22910">
    <property type="entry name" value="HFD_H2B"/>
    <property type="match status" value="1"/>
</dbReference>
<dbReference type="FunFam" id="1.10.20.10:FF:000016">
    <property type="entry name" value="Histone H2B"/>
    <property type="match status" value="1"/>
</dbReference>
<dbReference type="Gene3D" id="1.10.20.10">
    <property type="entry name" value="Histone, subunit A"/>
    <property type="match status" value="1"/>
</dbReference>
<dbReference type="InterPro" id="IPR009072">
    <property type="entry name" value="Histone-fold"/>
</dbReference>
<dbReference type="InterPro" id="IPR007125">
    <property type="entry name" value="Histone_H2A/H2B/H3"/>
</dbReference>
<dbReference type="InterPro" id="IPR000558">
    <property type="entry name" value="Histone_H2B"/>
</dbReference>
<dbReference type="InterPro" id="IPR055333">
    <property type="entry name" value="HISTONE_H2B_site"/>
</dbReference>
<dbReference type="PANTHER" id="PTHR23428">
    <property type="entry name" value="HISTONE H2B"/>
    <property type="match status" value="1"/>
</dbReference>
<dbReference type="Pfam" id="PF00125">
    <property type="entry name" value="Histone"/>
    <property type="match status" value="1"/>
</dbReference>
<dbReference type="PRINTS" id="PR00621">
    <property type="entry name" value="HISTONEH2B"/>
</dbReference>
<dbReference type="SMART" id="SM00427">
    <property type="entry name" value="H2B"/>
    <property type="match status" value="1"/>
</dbReference>
<dbReference type="SUPFAM" id="SSF47113">
    <property type="entry name" value="Histone-fold"/>
    <property type="match status" value="1"/>
</dbReference>
<dbReference type="PROSITE" id="PS00357">
    <property type="entry name" value="HISTONE_H2B"/>
    <property type="match status" value="1"/>
</dbReference>
<name>H2BS2_LYTPI</name>
<reference key="1">
    <citation type="journal article" date="1986" name="Nucleic Acids Res.">
        <title>Isolation and characterization of the gene encoding the testis specific histone protein H2B-2 from the sea urchin Lytechinus pictus.</title>
        <authorList>
            <person name="Lai Z.-C."/>
            <person name="Childs G.J."/>
        </authorList>
    </citation>
    <scope>NUCLEOTIDE SEQUENCE [GENOMIC DNA]</scope>
    <source>
        <tissue>Testis</tissue>
    </source>
</reference>
<reference key="2">
    <citation type="journal article" date="1986" name="Mol. Cell. Biol.">
        <title>Analysis of histone gene expression in adult tissues of the sea urchins Strongylocentrotus purpuratus and Lytechinus pictus: tissue-specific expression of sperm histone genes.</title>
        <authorList>
            <person name="Lieber T."/>
            <person name="Weisser K."/>
            <person name="Childs G."/>
        </authorList>
    </citation>
    <scope>NUCLEOTIDE SEQUENCE [MRNA] OF 59-143</scope>
    <scope>TISSUE SPECIFICITY</scope>
    <source>
        <tissue>Testis</tissue>
    </source>
</reference>